<gene>
    <name evidence="1" type="primary">der</name>
    <name type="synonym">engA</name>
    <name type="ordered locus">BOV_0390</name>
</gene>
<name>DER_BRUO2</name>
<reference key="1">
    <citation type="journal article" date="2009" name="PLoS ONE">
        <title>Genome degradation in Brucella ovis corresponds with narrowing of its host range and tissue tropism.</title>
        <authorList>
            <person name="Tsolis R.M."/>
            <person name="Seshadri R."/>
            <person name="Santos R.L."/>
            <person name="Sangari F.J."/>
            <person name="Lobo J.M."/>
            <person name="de Jong M.F."/>
            <person name="Ren Q."/>
            <person name="Myers G."/>
            <person name="Brinkac L.M."/>
            <person name="Nelson W.C."/>
            <person name="Deboy R.T."/>
            <person name="Angiuoli S."/>
            <person name="Khouri H."/>
            <person name="Dimitrov G."/>
            <person name="Robinson J.R."/>
            <person name="Mulligan S."/>
            <person name="Walker R.L."/>
            <person name="Elzer P.E."/>
            <person name="Hassan K.A."/>
            <person name="Paulsen I.T."/>
        </authorList>
    </citation>
    <scope>NUCLEOTIDE SEQUENCE [LARGE SCALE GENOMIC DNA]</scope>
    <source>
        <strain>ATCC 25840 / 63/290 / NCTC 10512</strain>
    </source>
</reference>
<evidence type="ECO:0000255" key="1">
    <source>
        <dbReference type="HAMAP-Rule" id="MF_00195"/>
    </source>
</evidence>
<accession>A5VNV9</accession>
<keyword id="KW-0342">GTP-binding</keyword>
<keyword id="KW-0547">Nucleotide-binding</keyword>
<keyword id="KW-0677">Repeat</keyword>
<keyword id="KW-0690">Ribosome biogenesis</keyword>
<protein>
    <recommendedName>
        <fullName evidence="1">GTPase Der</fullName>
    </recommendedName>
    <alternativeName>
        <fullName evidence="1">GTP-binding protein EngA</fullName>
    </alternativeName>
</protein>
<organism>
    <name type="scientific">Brucella ovis (strain ATCC 25840 / 63/290 / NCTC 10512)</name>
    <dbReference type="NCBI Taxonomy" id="444178"/>
    <lineage>
        <taxon>Bacteria</taxon>
        <taxon>Pseudomonadati</taxon>
        <taxon>Pseudomonadota</taxon>
        <taxon>Alphaproteobacteria</taxon>
        <taxon>Hyphomicrobiales</taxon>
        <taxon>Brucellaceae</taxon>
        <taxon>Brucella/Ochrobactrum group</taxon>
        <taxon>Brucella</taxon>
    </lineage>
</organism>
<proteinExistence type="inferred from homology"/>
<feature type="chain" id="PRO_1000011577" description="GTPase Der">
    <location>
        <begin position="1"/>
        <end position="483"/>
    </location>
</feature>
<feature type="domain" description="EngA-type G 1">
    <location>
        <begin position="3"/>
        <end position="167"/>
    </location>
</feature>
<feature type="domain" description="EngA-type G 2">
    <location>
        <begin position="212"/>
        <end position="387"/>
    </location>
</feature>
<feature type="domain" description="KH-like" evidence="1">
    <location>
        <begin position="388"/>
        <end position="472"/>
    </location>
</feature>
<feature type="binding site" evidence="1">
    <location>
        <begin position="9"/>
        <end position="16"/>
    </location>
    <ligand>
        <name>GTP</name>
        <dbReference type="ChEBI" id="CHEBI:37565"/>
        <label>1</label>
    </ligand>
</feature>
<feature type="binding site" evidence="1">
    <location>
        <begin position="56"/>
        <end position="60"/>
    </location>
    <ligand>
        <name>GTP</name>
        <dbReference type="ChEBI" id="CHEBI:37565"/>
        <label>1</label>
    </ligand>
</feature>
<feature type="binding site" evidence="1">
    <location>
        <begin position="119"/>
        <end position="122"/>
    </location>
    <ligand>
        <name>GTP</name>
        <dbReference type="ChEBI" id="CHEBI:37565"/>
        <label>1</label>
    </ligand>
</feature>
<feature type="binding site" evidence="1">
    <location>
        <begin position="218"/>
        <end position="225"/>
    </location>
    <ligand>
        <name>GTP</name>
        <dbReference type="ChEBI" id="CHEBI:37565"/>
        <label>2</label>
    </ligand>
</feature>
<feature type="binding site" evidence="1">
    <location>
        <begin position="265"/>
        <end position="269"/>
    </location>
    <ligand>
        <name>GTP</name>
        <dbReference type="ChEBI" id="CHEBI:37565"/>
        <label>2</label>
    </ligand>
</feature>
<feature type="binding site" evidence="1">
    <location>
        <begin position="330"/>
        <end position="333"/>
    </location>
    <ligand>
        <name>GTP</name>
        <dbReference type="ChEBI" id="CHEBI:37565"/>
        <label>2</label>
    </ligand>
</feature>
<dbReference type="EMBL" id="CP000708">
    <property type="protein sequence ID" value="ABQ60703.1"/>
    <property type="molecule type" value="Genomic_DNA"/>
</dbReference>
<dbReference type="RefSeq" id="WP_005978289.1">
    <property type="nucleotide sequence ID" value="NC_009505.1"/>
</dbReference>
<dbReference type="SMR" id="A5VNV9"/>
<dbReference type="GeneID" id="45123871"/>
<dbReference type="KEGG" id="bov:BOV_0390"/>
<dbReference type="HOGENOM" id="CLU_016077_5_0_5"/>
<dbReference type="PhylomeDB" id="A5VNV9"/>
<dbReference type="Proteomes" id="UP000006383">
    <property type="component" value="Chromosome I"/>
</dbReference>
<dbReference type="GO" id="GO:0005525">
    <property type="term" value="F:GTP binding"/>
    <property type="evidence" value="ECO:0007669"/>
    <property type="project" value="UniProtKB-UniRule"/>
</dbReference>
<dbReference type="GO" id="GO:0042254">
    <property type="term" value="P:ribosome biogenesis"/>
    <property type="evidence" value="ECO:0007669"/>
    <property type="project" value="UniProtKB-KW"/>
</dbReference>
<dbReference type="CDD" id="cd01894">
    <property type="entry name" value="EngA1"/>
    <property type="match status" value="1"/>
</dbReference>
<dbReference type="CDD" id="cd01895">
    <property type="entry name" value="EngA2"/>
    <property type="match status" value="1"/>
</dbReference>
<dbReference type="FunFam" id="3.30.300.20:FF:000004">
    <property type="entry name" value="GTPase Der"/>
    <property type="match status" value="1"/>
</dbReference>
<dbReference type="FunFam" id="3.40.50.300:FF:000057">
    <property type="entry name" value="GTPase Der"/>
    <property type="match status" value="1"/>
</dbReference>
<dbReference type="Gene3D" id="3.30.300.20">
    <property type="match status" value="1"/>
</dbReference>
<dbReference type="Gene3D" id="3.40.50.300">
    <property type="entry name" value="P-loop containing nucleotide triphosphate hydrolases"/>
    <property type="match status" value="2"/>
</dbReference>
<dbReference type="HAMAP" id="MF_00195">
    <property type="entry name" value="GTPase_Der"/>
    <property type="match status" value="1"/>
</dbReference>
<dbReference type="InterPro" id="IPR031166">
    <property type="entry name" value="G_ENGA"/>
</dbReference>
<dbReference type="InterPro" id="IPR006073">
    <property type="entry name" value="GTP-bd"/>
</dbReference>
<dbReference type="InterPro" id="IPR016484">
    <property type="entry name" value="GTPase_Der"/>
</dbReference>
<dbReference type="InterPro" id="IPR032859">
    <property type="entry name" value="KH_dom-like"/>
</dbReference>
<dbReference type="InterPro" id="IPR015946">
    <property type="entry name" value="KH_dom-like_a/b"/>
</dbReference>
<dbReference type="InterPro" id="IPR027417">
    <property type="entry name" value="P-loop_NTPase"/>
</dbReference>
<dbReference type="InterPro" id="IPR005225">
    <property type="entry name" value="Small_GTP-bd"/>
</dbReference>
<dbReference type="NCBIfam" id="TIGR03594">
    <property type="entry name" value="GTPase_EngA"/>
    <property type="match status" value="1"/>
</dbReference>
<dbReference type="NCBIfam" id="TIGR00231">
    <property type="entry name" value="small_GTP"/>
    <property type="match status" value="2"/>
</dbReference>
<dbReference type="PANTHER" id="PTHR43834">
    <property type="entry name" value="GTPASE DER"/>
    <property type="match status" value="1"/>
</dbReference>
<dbReference type="PANTHER" id="PTHR43834:SF6">
    <property type="entry name" value="GTPASE DER"/>
    <property type="match status" value="1"/>
</dbReference>
<dbReference type="Pfam" id="PF14714">
    <property type="entry name" value="KH_dom-like"/>
    <property type="match status" value="1"/>
</dbReference>
<dbReference type="Pfam" id="PF01926">
    <property type="entry name" value="MMR_HSR1"/>
    <property type="match status" value="2"/>
</dbReference>
<dbReference type="PIRSF" id="PIRSF006485">
    <property type="entry name" value="GTP-binding_EngA"/>
    <property type="match status" value="1"/>
</dbReference>
<dbReference type="PRINTS" id="PR00326">
    <property type="entry name" value="GTP1OBG"/>
</dbReference>
<dbReference type="SUPFAM" id="SSF52540">
    <property type="entry name" value="P-loop containing nucleoside triphosphate hydrolases"/>
    <property type="match status" value="2"/>
</dbReference>
<dbReference type="PROSITE" id="PS51712">
    <property type="entry name" value="G_ENGA"/>
    <property type="match status" value="2"/>
</dbReference>
<comment type="function">
    <text evidence="1">GTPase that plays an essential role in the late steps of ribosome biogenesis.</text>
</comment>
<comment type="subunit">
    <text evidence="1">Associates with the 50S ribosomal subunit.</text>
</comment>
<comment type="similarity">
    <text evidence="1">Belongs to the TRAFAC class TrmE-Era-EngA-EngB-Septin-like GTPase superfamily. EngA (Der) GTPase family.</text>
</comment>
<sequence>MGFTLAIVGRPNVGKSTLFNRLVGRKLALVDDLPGVTRDRRIHDAKLYDLKFQVIDTAGLEEAANDSLEARMRAQTEAAISEADAVLFVIDAKAGITPADSTFAEAVRRSGKPVVLVANKAEARGSEAGMYDAFQLGLGEPCPISAKHGQGMPDLRDAIVELLGEERVFAEERQEEAADEVFTPAAVGALVGDDIEDPDAEEIPAYDATKPLRIAIVGRPNAGKSTLINTMLGEDRLLTGPEAGITRDSISADWEWHGRKIKLFDTAGMRRKARVQEKLEKLSVADGLRAIRFAEVVIIVLDATIPFEKQDLQIADLIIREGRAPVIAFNKWDLIEDRQMVLADLYEKTARLLPQVRGLRAVPISGERGQGIDKLMENVVKTHEIWNRRISTGRLNRWLEGVIAHQPPPAVSGRRLKVKYMTQVKTRPPGFVVSCSRPNAMPQSYVRYFINGLRETFDMPGVPIRLSLRTSDNPFAGRAKKKK</sequence>